<keyword id="KW-0963">Cytoplasm</keyword>
<keyword id="KW-0312">Gluconeogenesis</keyword>
<keyword id="KW-0324">Glycolysis</keyword>
<keyword id="KW-0413">Isomerase</keyword>
<keyword id="KW-1185">Reference proteome</keyword>
<evidence type="ECO:0000255" key="1">
    <source>
        <dbReference type="HAMAP-Rule" id="MF_00473"/>
    </source>
</evidence>
<protein>
    <recommendedName>
        <fullName evidence="1">Glucose-6-phosphate isomerase</fullName>
        <shortName evidence="1">GPI</shortName>
        <ecNumber evidence="1">5.3.1.9</ecNumber>
    </recommendedName>
    <alternativeName>
        <fullName evidence="1">Phosphoglucose isomerase</fullName>
        <shortName evidence="1">PGI</shortName>
    </alternativeName>
    <alternativeName>
        <fullName evidence="1">Phosphohexose isomerase</fullName>
        <shortName evidence="1">PHI</shortName>
    </alternativeName>
</protein>
<gene>
    <name evidence="1" type="primary">pgi</name>
    <name type="ordered locus">ELI_04850</name>
</gene>
<accession>Q2NB79</accession>
<proteinExistence type="inferred from homology"/>
<feature type="chain" id="PRO_1000013964" description="Glucose-6-phosphate isomerase">
    <location>
        <begin position="1"/>
        <end position="517"/>
    </location>
</feature>
<feature type="active site" description="Proton donor" evidence="1">
    <location>
        <position position="345"/>
    </location>
</feature>
<feature type="active site" evidence="1">
    <location>
        <position position="376"/>
    </location>
</feature>
<feature type="active site" evidence="1">
    <location>
        <position position="490"/>
    </location>
</feature>
<sequence length="517" mass="54607">MSDAETNAWDAIHRVEKRTLLELFDADSERVSKLSHRLAWGVESPGGQEAGGILFDWSKTHLTDELLDGFEALADAMDFAGAREKLLSGAKINVTEGRAAEHTAQRGTGAEASVEEAVALMGRMKALVDAIHGGAMGEVKHLIHVGIGGSALGPKLALDALTRDLALVDVHVVSNIDGVALEQAFAACDPATTLIAIASKTFTTIETMTNATSALHWLKTNGVDDPHGRVVALTANPEAAVEFGVDETRVLPFMESVGGRYSLWSSIGFPVALGAGWDEFEGMLAGAQAMDEHFASADGRANLPLLAAFADLYYTRVRGCQARACFAYDERLGLLPDYLQQLEMESNGKRVKADGTPVDGPTAPITWGGVGTDAQHAVFQLLHQGTHLVPVDFIASIAPGDDLDPAHHRILLTNCFAQGAALMAGGNMAADEKDPARVFPGDRPSATMLCDDLDAVTLGALIAFHEHRTFANAVLMGINPFDQFGVELGKKMAKDIESGGAEFDASTQALVGAAGLA</sequence>
<reference key="1">
    <citation type="journal article" date="2009" name="J. Bacteriol.">
        <title>Complete genome sequence of Erythrobacter litoralis HTCC2594.</title>
        <authorList>
            <person name="Oh H.M."/>
            <person name="Giovannoni S.J."/>
            <person name="Ferriera S."/>
            <person name="Johnson J."/>
            <person name="Cho J.C."/>
        </authorList>
    </citation>
    <scope>NUCLEOTIDE SEQUENCE [LARGE SCALE GENOMIC DNA]</scope>
    <source>
        <strain>HTCC2594</strain>
    </source>
</reference>
<comment type="function">
    <text evidence="1">Catalyzes the reversible isomerization of glucose-6-phosphate to fructose-6-phosphate.</text>
</comment>
<comment type="catalytic activity">
    <reaction evidence="1">
        <text>alpha-D-glucose 6-phosphate = beta-D-fructose 6-phosphate</text>
        <dbReference type="Rhea" id="RHEA:11816"/>
        <dbReference type="ChEBI" id="CHEBI:57634"/>
        <dbReference type="ChEBI" id="CHEBI:58225"/>
        <dbReference type="EC" id="5.3.1.9"/>
    </reaction>
</comment>
<comment type="pathway">
    <text evidence="1">Carbohydrate biosynthesis; gluconeogenesis.</text>
</comment>
<comment type="pathway">
    <text evidence="1">Carbohydrate degradation; glycolysis; D-glyceraldehyde 3-phosphate and glycerone phosphate from D-glucose: step 2/4.</text>
</comment>
<comment type="subcellular location">
    <subcellularLocation>
        <location evidence="1">Cytoplasm</location>
    </subcellularLocation>
</comment>
<comment type="similarity">
    <text evidence="1">Belongs to the GPI family.</text>
</comment>
<name>G6PI_ERYLH</name>
<organism>
    <name type="scientific">Erythrobacter litoralis (strain HTCC2594)</name>
    <dbReference type="NCBI Taxonomy" id="314225"/>
    <lineage>
        <taxon>Bacteria</taxon>
        <taxon>Pseudomonadati</taxon>
        <taxon>Pseudomonadota</taxon>
        <taxon>Alphaproteobacteria</taxon>
        <taxon>Sphingomonadales</taxon>
        <taxon>Erythrobacteraceae</taxon>
        <taxon>Erythrobacter/Porphyrobacter group</taxon>
        <taxon>Erythrobacter</taxon>
    </lineage>
</organism>
<dbReference type="EC" id="5.3.1.9" evidence="1"/>
<dbReference type="EMBL" id="CP000157">
    <property type="protein sequence ID" value="ABC63062.1"/>
    <property type="molecule type" value="Genomic_DNA"/>
</dbReference>
<dbReference type="RefSeq" id="WP_011413898.1">
    <property type="nucleotide sequence ID" value="NC_007722.1"/>
</dbReference>
<dbReference type="SMR" id="Q2NB79"/>
<dbReference type="STRING" id="314225.ELI_04850"/>
<dbReference type="KEGG" id="eli:ELI_04850"/>
<dbReference type="eggNOG" id="COG0166">
    <property type="taxonomic scope" value="Bacteria"/>
</dbReference>
<dbReference type="HOGENOM" id="CLU_017947_3_1_5"/>
<dbReference type="OrthoDB" id="140919at2"/>
<dbReference type="UniPathway" id="UPA00109">
    <property type="reaction ID" value="UER00181"/>
</dbReference>
<dbReference type="UniPathway" id="UPA00138"/>
<dbReference type="Proteomes" id="UP000008808">
    <property type="component" value="Chromosome"/>
</dbReference>
<dbReference type="GO" id="GO:0005829">
    <property type="term" value="C:cytosol"/>
    <property type="evidence" value="ECO:0007669"/>
    <property type="project" value="TreeGrafter"/>
</dbReference>
<dbReference type="GO" id="GO:0097367">
    <property type="term" value="F:carbohydrate derivative binding"/>
    <property type="evidence" value="ECO:0007669"/>
    <property type="project" value="InterPro"/>
</dbReference>
<dbReference type="GO" id="GO:0004347">
    <property type="term" value="F:glucose-6-phosphate isomerase activity"/>
    <property type="evidence" value="ECO:0007669"/>
    <property type="project" value="UniProtKB-UniRule"/>
</dbReference>
<dbReference type="GO" id="GO:0048029">
    <property type="term" value="F:monosaccharide binding"/>
    <property type="evidence" value="ECO:0007669"/>
    <property type="project" value="TreeGrafter"/>
</dbReference>
<dbReference type="GO" id="GO:0006094">
    <property type="term" value="P:gluconeogenesis"/>
    <property type="evidence" value="ECO:0007669"/>
    <property type="project" value="UniProtKB-UniRule"/>
</dbReference>
<dbReference type="GO" id="GO:0051156">
    <property type="term" value="P:glucose 6-phosphate metabolic process"/>
    <property type="evidence" value="ECO:0007669"/>
    <property type="project" value="TreeGrafter"/>
</dbReference>
<dbReference type="GO" id="GO:0006096">
    <property type="term" value="P:glycolytic process"/>
    <property type="evidence" value="ECO:0007669"/>
    <property type="project" value="UniProtKB-UniRule"/>
</dbReference>
<dbReference type="CDD" id="cd05015">
    <property type="entry name" value="SIS_PGI_1"/>
    <property type="match status" value="1"/>
</dbReference>
<dbReference type="CDD" id="cd05016">
    <property type="entry name" value="SIS_PGI_2"/>
    <property type="match status" value="1"/>
</dbReference>
<dbReference type="Gene3D" id="1.10.1390.10">
    <property type="match status" value="1"/>
</dbReference>
<dbReference type="Gene3D" id="3.40.50.10490">
    <property type="entry name" value="Glucose-6-phosphate isomerase like protein, domain 1"/>
    <property type="match status" value="2"/>
</dbReference>
<dbReference type="HAMAP" id="MF_00473">
    <property type="entry name" value="G6P_isomerase"/>
    <property type="match status" value="1"/>
</dbReference>
<dbReference type="InterPro" id="IPR001672">
    <property type="entry name" value="G6P_Isomerase"/>
</dbReference>
<dbReference type="InterPro" id="IPR023096">
    <property type="entry name" value="G6P_Isomerase_C"/>
</dbReference>
<dbReference type="InterPro" id="IPR018189">
    <property type="entry name" value="Phosphoglucose_isomerase_CS"/>
</dbReference>
<dbReference type="InterPro" id="IPR046348">
    <property type="entry name" value="SIS_dom_sf"/>
</dbReference>
<dbReference type="InterPro" id="IPR035476">
    <property type="entry name" value="SIS_PGI_1"/>
</dbReference>
<dbReference type="InterPro" id="IPR035482">
    <property type="entry name" value="SIS_PGI_2"/>
</dbReference>
<dbReference type="NCBIfam" id="NF001211">
    <property type="entry name" value="PRK00179.1"/>
    <property type="match status" value="1"/>
</dbReference>
<dbReference type="PANTHER" id="PTHR11469">
    <property type="entry name" value="GLUCOSE-6-PHOSPHATE ISOMERASE"/>
    <property type="match status" value="1"/>
</dbReference>
<dbReference type="PANTHER" id="PTHR11469:SF1">
    <property type="entry name" value="GLUCOSE-6-PHOSPHATE ISOMERASE"/>
    <property type="match status" value="1"/>
</dbReference>
<dbReference type="Pfam" id="PF00342">
    <property type="entry name" value="PGI"/>
    <property type="match status" value="1"/>
</dbReference>
<dbReference type="PRINTS" id="PR00662">
    <property type="entry name" value="G6PISOMERASE"/>
</dbReference>
<dbReference type="SUPFAM" id="SSF53697">
    <property type="entry name" value="SIS domain"/>
    <property type="match status" value="1"/>
</dbReference>
<dbReference type="PROSITE" id="PS00765">
    <property type="entry name" value="P_GLUCOSE_ISOMERASE_1"/>
    <property type="match status" value="1"/>
</dbReference>
<dbReference type="PROSITE" id="PS00174">
    <property type="entry name" value="P_GLUCOSE_ISOMERASE_2"/>
    <property type="match status" value="1"/>
</dbReference>
<dbReference type="PROSITE" id="PS51463">
    <property type="entry name" value="P_GLUCOSE_ISOMERASE_3"/>
    <property type="match status" value="1"/>
</dbReference>